<name>RL13_ACIBY</name>
<sequence length="142" mass="15952">MKTLSAKPAEVQHDWFVVDATGKTLGRLATEIARRLRGKHKTSYTPHVDTGDYIIVINAEQVQVTGNKALDKKYYRHTEFPGGLKETNFEKLVAHKPEEIFERAVKGMLPKGPLGYAMIKKMKVYAGSEHPHAAQQPQVLDI</sequence>
<accession>B0V669</accession>
<reference key="1">
    <citation type="journal article" date="2008" name="PLoS ONE">
        <title>Comparative analysis of Acinetobacters: three genomes for three lifestyles.</title>
        <authorList>
            <person name="Vallenet D."/>
            <person name="Nordmann P."/>
            <person name="Barbe V."/>
            <person name="Poirel L."/>
            <person name="Mangenot S."/>
            <person name="Bataille E."/>
            <person name="Dossat C."/>
            <person name="Gas S."/>
            <person name="Kreimeyer A."/>
            <person name="Lenoble P."/>
            <person name="Oztas S."/>
            <person name="Poulain J."/>
            <person name="Segurens B."/>
            <person name="Robert C."/>
            <person name="Abergel C."/>
            <person name="Claverie J.-M."/>
            <person name="Raoult D."/>
            <person name="Medigue C."/>
            <person name="Weissenbach J."/>
            <person name="Cruveiller S."/>
        </authorList>
    </citation>
    <scope>NUCLEOTIDE SEQUENCE [LARGE SCALE GENOMIC DNA]</scope>
    <source>
        <strain>AYE</strain>
    </source>
</reference>
<feature type="chain" id="PRO_1000144079" description="Large ribosomal subunit protein uL13">
    <location>
        <begin position="1"/>
        <end position="142"/>
    </location>
</feature>
<keyword id="KW-0687">Ribonucleoprotein</keyword>
<keyword id="KW-0689">Ribosomal protein</keyword>
<gene>
    <name evidence="1" type="primary">rplM</name>
    <name type="ordered locus">ABAYE0488</name>
</gene>
<proteinExistence type="inferred from homology"/>
<protein>
    <recommendedName>
        <fullName evidence="1">Large ribosomal subunit protein uL13</fullName>
    </recommendedName>
    <alternativeName>
        <fullName evidence="2">50S ribosomal protein L13</fullName>
    </alternativeName>
</protein>
<evidence type="ECO:0000255" key="1">
    <source>
        <dbReference type="HAMAP-Rule" id="MF_01366"/>
    </source>
</evidence>
<evidence type="ECO:0000305" key="2"/>
<organism>
    <name type="scientific">Acinetobacter baumannii (strain AYE)</name>
    <dbReference type="NCBI Taxonomy" id="509173"/>
    <lineage>
        <taxon>Bacteria</taxon>
        <taxon>Pseudomonadati</taxon>
        <taxon>Pseudomonadota</taxon>
        <taxon>Gammaproteobacteria</taxon>
        <taxon>Moraxellales</taxon>
        <taxon>Moraxellaceae</taxon>
        <taxon>Acinetobacter</taxon>
        <taxon>Acinetobacter calcoaceticus/baumannii complex</taxon>
    </lineage>
</organism>
<dbReference type="EMBL" id="CU459141">
    <property type="protein sequence ID" value="CAM85459.1"/>
    <property type="molecule type" value="Genomic_DNA"/>
</dbReference>
<dbReference type="RefSeq" id="WP_000854895.1">
    <property type="nucleotide sequence ID" value="NZ_JBDGFB010000023.1"/>
</dbReference>
<dbReference type="SMR" id="B0V669"/>
<dbReference type="EnsemblBacteria" id="CAM85459">
    <property type="protein sequence ID" value="CAM85459"/>
    <property type="gene ID" value="ABAYE0488"/>
</dbReference>
<dbReference type="KEGG" id="aby:ABAYE0488"/>
<dbReference type="HOGENOM" id="CLU_082184_2_2_6"/>
<dbReference type="GO" id="GO:0022625">
    <property type="term" value="C:cytosolic large ribosomal subunit"/>
    <property type="evidence" value="ECO:0007669"/>
    <property type="project" value="TreeGrafter"/>
</dbReference>
<dbReference type="GO" id="GO:0003729">
    <property type="term" value="F:mRNA binding"/>
    <property type="evidence" value="ECO:0007669"/>
    <property type="project" value="TreeGrafter"/>
</dbReference>
<dbReference type="GO" id="GO:0003735">
    <property type="term" value="F:structural constituent of ribosome"/>
    <property type="evidence" value="ECO:0007669"/>
    <property type="project" value="InterPro"/>
</dbReference>
<dbReference type="GO" id="GO:0017148">
    <property type="term" value="P:negative regulation of translation"/>
    <property type="evidence" value="ECO:0007669"/>
    <property type="project" value="TreeGrafter"/>
</dbReference>
<dbReference type="GO" id="GO:0006412">
    <property type="term" value="P:translation"/>
    <property type="evidence" value="ECO:0007669"/>
    <property type="project" value="UniProtKB-UniRule"/>
</dbReference>
<dbReference type="CDD" id="cd00392">
    <property type="entry name" value="Ribosomal_L13"/>
    <property type="match status" value="1"/>
</dbReference>
<dbReference type="FunFam" id="3.90.1180.10:FF:000001">
    <property type="entry name" value="50S ribosomal protein L13"/>
    <property type="match status" value="1"/>
</dbReference>
<dbReference type="Gene3D" id="3.90.1180.10">
    <property type="entry name" value="Ribosomal protein L13"/>
    <property type="match status" value="1"/>
</dbReference>
<dbReference type="HAMAP" id="MF_01366">
    <property type="entry name" value="Ribosomal_uL13"/>
    <property type="match status" value="1"/>
</dbReference>
<dbReference type="InterPro" id="IPR005822">
    <property type="entry name" value="Ribosomal_uL13"/>
</dbReference>
<dbReference type="InterPro" id="IPR005823">
    <property type="entry name" value="Ribosomal_uL13_bac-type"/>
</dbReference>
<dbReference type="InterPro" id="IPR036899">
    <property type="entry name" value="Ribosomal_uL13_sf"/>
</dbReference>
<dbReference type="NCBIfam" id="TIGR01066">
    <property type="entry name" value="rplM_bact"/>
    <property type="match status" value="1"/>
</dbReference>
<dbReference type="PANTHER" id="PTHR11545:SF2">
    <property type="entry name" value="LARGE RIBOSOMAL SUBUNIT PROTEIN UL13M"/>
    <property type="match status" value="1"/>
</dbReference>
<dbReference type="PANTHER" id="PTHR11545">
    <property type="entry name" value="RIBOSOMAL PROTEIN L13"/>
    <property type="match status" value="1"/>
</dbReference>
<dbReference type="Pfam" id="PF00572">
    <property type="entry name" value="Ribosomal_L13"/>
    <property type="match status" value="1"/>
</dbReference>
<dbReference type="PIRSF" id="PIRSF002181">
    <property type="entry name" value="Ribosomal_L13"/>
    <property type="match status" value="1"/>
</dbReference>
<dbReference type="SUPFAM" id="SSF52161">
    <property type="entry name" value="Ribosomal protein L13"/>
    <property type="match status" value="1"/>
</dbReference>
<comment type="function">
    <text evidence="1">This protein is one of the early assembly proteins of the 50S ribosomal subunit, although it is not seen to bind rRNA by itself. It is important during the early stages of 50S assembly.</text>
</comment>
<comment type="subunit">
    <text evidence="1">Part of the 50S ribosomal subunit.</text>
</comment>
<comment type="similarity">
    <text evidence="1">Belongs to the universal ribosomal protein uL13 family.</text>
</comment>